<dbReference type="EC" id="5.4.99.12" evidence="1"/>
<dbReference type="EMBL" id="AE013598">
    <property type="protein sequence ID" value="AAW76509.1"/>
    <property type="molecule type" value="Genomic_DNA"/>
</dbReference>
<dbReference type="SMR" id="Q5GXR2"/>
<dbReference type="STRING" id="291331.XOO3255"/>
<dbReference type="KEGG" id="xoo:XOO3255"/>
<dbReference type="HOGENOM" id="CLU_014673_0_2_6"/>
<dbReference type="Proteomes" id="UP000006735">
    <property type="component" value="Chromosome"/>
</dbReference>
<dbReference type="GO" id="GO:0003723">
    <property type="term" value="F:RNA binding"/>
    <property type="evidence" value="ECO:0007669"/>
    <property type="project" value="InterPro"/>
</dbReference>
<dbReference type="GO" id="GO:0160147">
    <property type="term" value="F:tRNA pseudouridine(38-40) synthase activity"/>
    <property type="evidence" value="ECO:0007669"/>
    <property type="project" value="UniProtKB-EC"/>
</dbReference>
<dbReference type="GO" id="GO:0031119">
    <property type="term" value="P:tRNA pseudouridine synthesis"/>
    <property type="evidence" value="ECO:0007669"/>
    <property type="project" value="UniProtKB-UniRule"/>
</dbReference>
<dbReference type="CDD" id="cd02570">
    <property type="entry name" value="PseudoU_synth_EcTruA"/>
    <property type="match status" value="1"/>
</dbReference>
<dbReference type="FunFam" id="3.30.70.580:FF:000001">
    <property type="entry name" value="tRNA pseudouridine synthase A"/>
    <property type="match status" value="1"/>
</dbReference>
<dbReference type="FunFam" id="3.30.70.660:FF:000008">
    <property type="entry name" value="tRNA pseudouridine synthase A"/>
    <property type="match status" value="1"/>
</dbReference>
<dbReference type="Gene3D" id="3.30.70.660">
    <property type="entry name" value="Pseudouridine synthase I, catalytic domain, C-terminal subdomain"/>
    <property type="match status" value="1"/>
</dbReference>
<dbReference type="Gene3D" id="3.30.70.580">
    <property type="entry name" value="Pseudouridine synthase I, catalytic domain, N-terminal subdomain"/>
    <property type="match status" value="1"/>
</dbReference>
<dbReference type="HAMAP" id="MF_00171">
    <property type="entry name" value="TruA"/>
    <property type="match status" value="1"/>
</dbReference>
<dbReference type="InterPro" id="IPR020103">
    <property type="entry name" value="PsdUridine_synth_cat_dom_sf"/>
</dbReference>
<dbReference type="InterPro" id="IPR001406">
    <property type="entry name" value="PsdUridine_synth_TruA"/>
</dbReference>
<dbReference type="InterPro" id="IPR020097">
    <property type="entry name" value="PsdUridine_synth_TruA_a/b_dom"/>
</dbReference>
<dbReference type="InterPro" id="IPR020095">
    <property type="entry name" value="PsdUridine_synth_TruA_C"/>
</dbReference>
<dbReference type="InterPro" id="IPR020094">
    <property type="entry name" value="TruA/RsuA/RluB/E/F_N"/>
</dbReference>
<dbReference type="NCBIfam" id="TIGR00071">
    <property type="entry name" value="hisT_truA"/>
    <property type="match status" value="1"/>
</dbReference>
<dbReference type="PANTHER" id="PTHR11142">
    <property type="entry name" value="PSEUDOURIDYLATE SYNTHASE"/>
    <property type="match status" value="1"/>
</dbReference>
<dbReference type="PANTHER" id="PTHR11142:SF0">
    <property type="entry name" value="TRNA PSEUDOURIDINE SYNTHASE-LIKE 1"/>
    <property type="match status" value="1"/>
</dbReference>
<dbReference type="Pfam" id="PF01416">
    <property type="entry name" value="PseudoU_synth_1"/>
    <property type="match status" value="2"/>
</dbReference>
<dbReference type="PIRSF" id="PIRSF001430">
    <property type="entry name" value="tRNA_psdUrid_synth"/>
    <property type="match status" value="1"/>
</dbReference>
<dbReference type="SUPFAM" id="SSF55120">
    <property type="entry name" value="Pseudouridine synthase"/>
    <property type="match status" value="1"/>
</dbReference>
<comment type="function">
    <text evidence="1">Formation of pseudouridine at positions 38, 39 and 40 in the anticodon stem and loop of transfer RNAs.</text>
</comment>
<comment type="catalytic activity">
    <reaction evidence="1">
        <text>uridine(38/39/40) in tRNA = pseudouridine(38/39/40) in tRNA</text>
        <dbReference type="Rhea" id="RHEA:22376"/>
        <dbReference type="Rhea" id="RHEA-COMP:10085"/>
        <dbReference type="Rhea" id="RHEA-COMP:10087"/>
        <dbReference type="ChEBI" id="CHEBI:65314"/>
        <dbReference type="ChEBI" id="CHEBI:65315"/>
        <dbReference type="EC" id="5.4.99.12"/>
    </reaction>
</comment>
<comment type="subunit">
    <text evidence="1">Homodimer.</text>
</comment>
<comment type="similarity">
    <text evidence="1">Belongs to the tRNA pseudouridine synthase TruA family.</text>
</comment>
<keyword id="KW-0413">Isomerase</keyword>
<keyword id="KW-1185">Reference proteome</keyword>
<keyword id="KW-0819">tRNA processing</keyword>
<gene>
    <name evidence="1" type="primary">truA</name>
    <name type="ordered locus">XOO3255</name>
</gene>
<sequence length="257" mass="28305">MRYALGVEYDGSEFQGWQQLGEHGGPSVQASLQAALSSVADAPVQVVCAGRTDAGVHGECQVVHFDSDAHREPRGWMLGTTARLPPSIAVRWCVPAAADFHARFSARARRYRYRLLNRQIRPALYRQTLSWERRPLDADAMHVAAQALLGENDFSAFRSVQCQALHARRNLQAIHVQRIGEVVEVQVQANAFLHHMVRNIVGSLILVGTGEQPADWIATLLAGRDRTVAGPTAPPQGLVFIGPLYPAEWHLPAEVTQ</sequence>
<evidence type="ECO:0000255" key="1">
    <source>
        <dbReference type="HAMAP-Rule" id="MF_00171"/>
    </source>
</evidence>
<accession>Q5GXR2</accession>
<reference key="1">
    <citation type="journal article" date="2005" name="Nucleic Acids Res.">
        <title>The genome sequence of Xanthomonas oryzae pathovar oryzae KACC10331, the bacterial blight pathogen of rice.</title>
        <authorList>
            <person name="Lee B.-M."/>
            <person name="Park Y.-J."/>
            <person name="Park D.-S."/>
            <person name="Kang H.-W."/>
            <person name="Kim J.-G."/>
            <person name="Song E.-S."/>
            <person name="Park I.-C."/>
            <person name="Yoon U.-H."/>
            <person name="Hahn J.-H."/>
            <person name="Koo B.-S."/>
            <person name="Lee G.-B."/>
            <person name="Kim H."/>
            <person name="Park H.-S."/>
            <person name="Yoon K.-O."/>
            <person name="Kim J.-H."/>
            <person name="Jung C.-H."/>
            <person name="Koh N.-H."/>
            <person name="Seo J.-S."/>
            <person name="Go S.-J."/>
        </authorList>
    </citation>
    <scope>NUCLEOTIDE SEQUENCE [LARGE SCALE GENOMIC DNA]</scope>
    <source>
        <strain>KACC10331 / KXO85</strain>
    </source>
</reference>
<proteinExistence type="inferred from homology"/>
<feature type="chain" id="PRO_0000057493" description="tRNA pseudouridine synthase A">
    <location>
        <begin position="1"/>
        <end position="257"/>
    </location>
</feature>
<feature type="active site" description="Nucleophile" evidence="1">
    <location>
        <position position="53"/>
    </location>
</feature>
<feature type="binding site" evidence="1">
    <location>
        <position position="111"/>
    </location>
    <ligand>
        <name>substrate</name>
    </ligand>
</feature>
<organism>
    <name type="scientific">Xanthomonas oryzae pv. oryzae (strain KACC10331 / KXO85)</name>
    <dbReference type="NCBI Taxonomy" id="291331"/>
    <lineage>
        <taxon>Bacteria</taxon>
        <taxon>Pseudomonadati</taxon>
        <taxon>Pseudomonadota</taxon>
        <taxon>Gammaproteobacteria</taxon>
        <taxon>Lysobacterales</taxon>
        <taxon>Lysobacteraceae</taxon>
        <taxon>Xanthomonas</taxon>
    </lineage>
</organism>
<protein>
    <recommendedName>
        <fullName evidence="1">tRNA pseudouridine synthase A</fullName>
        <ecNumber evidence="1">5.4.99.12</ecNumber>
    </recommendedName>
    <alternativeName>
        <fullName evidence="1">tRNA pseudouridine(38-40) synthase</fullName>
    </alternativeName>
    <alternativeName>
        <fullName evidence="1">tRNA pseudouridylate synthase I</fullName>
    </alternativeName>
    <alternativeName>
        <fullName evidence="1">tRNA-uridine isomerase I</fullName>
    </alternativeName>
</protein>
<name>TRUA_XANOR</name>